<protein>
    <recommendedName>
        <fullName>Putative inactive glutathione hydrolase 4</fullName>
    </recommendedName>
    <alternativeName>
        <fullName>Gamma-glutamyltranspeptidase 3</fullName>
    </alternativeName>
    <alternativeName>
        <fullName>Putative inactive gamma-glutamyltranspeptidase 4</fullName>
    </alternativeName>
</protein>
<organism>
    <name type="scientific">Arabidopsis thaliana</name>
    <name type="common">Mouse-ear cress</name>
    <dbReference type="NCBI Taxonomy" id="3702"/>
    <lineage>
        <taxon>Eukaryota</taxon>
        <taxon>Viridiplantae</taxon>
        <taxon>Streptophyta</taxon>
        <taxon>Embryophyta</taxon>
        <taxon>Tracheophyta</taxon>
        <taxon>Spermatophyta</taxon>
        <taxon>Magnoliopsida</taxon>
        <taxon>eudicotyledons</taxon>
        <taxon>Gunneridae</taxon>
        <taxon>Pentapetalae</taxon>
        <taxon>rosids</taxon>
        <taxon>malvids</taxon>
        <taxon>Brassicales</taxon>
        <taxon>Brassicaceae</taxon>
        <taxon>Camelineae</taxon>
        <taxon>Arabidopsis</taxon>
    </lineage>
</organism>
<name>GAGT4_ARATH</name>
<accession>Q9CAR5</accession>
<dbReference type="EMBL" id="AC010675">
    <property type="protein sequence ID" value="AAG52560.1"/>
    <property type="molecule type" value="Genomic_DNA"/>
</dbReference>
<dbReference type="EMBL" id="CP002684">
    <property type="status" value="NOT_ANNOTATED_CDS"/>
    <property type="molecule type" value="Genomic_DNA"/>
</dbReference>
<dbReference type="PIR" id="D96720">
    <property type="entry name" value="D96720"/>
</dbReference>
<dbReference type="SMR" id="Q9CAR5"/>
<dbReference type="FunCoup" id="Q9CAR5">
    <property type="interactions" value="1"/>
</dbReference>
<dbReference type="STRING" id="3702.Q9CAR5"/>
<dbReference type="MEROPS" id="T03.008"/>
<dbReference type="PaxDb" id="3702-AT1G69820.1"/>
<dbReference type="Araport" id="AT1G69820"/>
<dbReference type="TAIR" id="AT1G69820">
    <property type="gene designation" value="GGT3"/>
</dbReference>
<dbReference type="eggNOG" id="KOG2410">
    <property type="taxonomic scope" value="Eukaryota"/>
</dbReference>
<dbReference type="HOGENOM" id="CLU_014813_1_2_1"/>
<dbReference type="InParanoid" id="Q9CAR5"/>
<dbReference type="PhylomeDB" id="Q9CAR5"/>
<dbReference type="BioCyc" id="ARA:AT1G69820-MONOMER"/>
<dbReference type="BRENDA" id="2.3.2.2">
    <property type="organism ID" value="399"/>
</dbReference>
<dbReference type="Proteomes" id="UP000006548">
    <property type="component" value="Chromosome 1"/>
</dbReference>
<dbReference type="ExpressionAtlas" id="Q9CAR5">
    <property type="expression patterns" value="baseline and differential"/>
</dbReference>
<dbReference type="GO" id="GO:0036374">
    <property type="term" value="F:glutathione hydrolase activity"/>
    <property type="evidence" value="ECO:0007669"/>
    <property type="project" value="InterPro"/>
</dbReference>
<dbReference type="GO" id="GO:0006751">
    <property type="term" value="P:glutathione catabolic process"/>
    <property type="evidence" value="ECO:0007669"/>
    <property type="project" value="InterPro"/>
</dbReference>
<dbReference type="FunFam" id="3.60.20.40:FF:000021">
    <property type="entry name" value="Putative inactive glutathione hydrolase 4"/>
    <property type="match status" value="1"/>
</dbReference>
<dbReference type="Gene3D" id="1.10.246.130">
    <property type="match status" value="1"/>
</dbReference>
<dbReference type="Gene3D" id="3.60.20.40">
    <property type="match status" value="1"/>
</dbReference>
<dbReference type="InterPro" id="IPR043138">
    <property type="entry name" value="GGT_lsub_C"/>
</dbReference>
<dbReference type="InterPro" id="IPR000101">
    <property type="entry name" value="GGT_peptidase"/>
</dbReference>
<dbReference type="InterPro" id="IPR043137">
    <property type="entry name" value="GGT_ssub"/>
</dbReference>
<dbReference type="InterPro" id="IPR029055">
    <property type="entry name" value="Ntn_hydrolases_N"/>
</dbReference>
<dbReference type="PANTHER" id="PTHR11686">
    <property type="entry name" value="GAMMA GLUTAMYL TRANSPEPTIDASE"/>
    <property type="match status" value="1"/>
</dbReference>
<dbReference type="PANTHER" id="PTHR11686:SF34">
    <property type="entry name" value="GLUTATHIONE HYDROLASE 1-RELATED"/>
    <property type="match status" value="1"/>
</dbReference>
<dbReference type="Pfam" id="PF01019">
    <property type="entry name" value="G_glu_transpept"/>
    <property type="match status" value="1"/>
</dbReference>
<dbReference type="PRINTS" id="PR01210">
    <property type="entry name" value="GGTRANSPTASE"/>
</dbReference>
<dbReference type="SUPFAM" id="SSF56235">
    <property type="entry name" value="N-terminal nucleophile aminohydrolases (Ntn hydrolases)"/>
    <property type="match status" value="1"/>
</dbReference>
<keyword id="KW-1185">Reference proteome</keyword>
<reference key="1">
    <citation type="journal article" date="2000" name="Nature">
        <title>Sequence and analysis of chromosome 1 of the plant Arabidopsis thaliana.</title>
        <authorList>
            <person name="Theologis A."/>
            <person name="Ecker J.R."/>
            <person name="Palm C.J."/>
            <person name="Federspiel N.A."/>
            <person name="Kaul S."/>
            <person name="White O."/>
            <person name="Alonso J."/>
            <person name="Altafi H."/>
            <person name="Araujo R."/>
            <person name="Bowman C.L."/>
            <person name="Brooks S.Y."/>
            <person name="Buehler E."/>
            <person name="Chan A."/>
            <person name="Chao Q."/>
            <person name="Chen H."/>
            <person name="Cheuk R.F."/>
            <person name="Chin C.W."/>
            <person name="Chung M.K."/>
            <person name="Conn L."/>
            <person name="Conway A.B."/>
            <person name="Conway A.R."/>
            <person name="Creasy T.H."/>
            <person name="Dewar K."/>
            <person name="Dunn P."/>
            <person name="Etgu P."/>
            <person name="Feldblyum T.V."/>
            <person name="Feng J.-D."/>
            <person name="Fong B."/>
            <person name="Fujii C.Y."/>
            <person name="Gill J.E."/>
            <person name="Goldsmith A.D."/>
            <person name="Haas B."/>
            <person name="Hansen N.F."/>
            <person name="Hughes B."/>
            <person name="Huizar L."/>
            <person name="Hunter J.L."/>
            <person name="Jenkins J."/>
            <person name="Johnson-Hopson C."/>
            <person name="Khan S."/>
            <person name="Khaykin E."/>
            <person name="Kim C.J."/>
            <person name="Koo H.L."/>
            <person name="Kremenetskaia I."/>
            <person name="Kurtz D.B."/>
            <person name="Kwan A."/>
            <person name="Lam B."/>
            <person name="Langin-Hooper S."/>
            <person name="Lee A."/>
            <person name="Lee J.M."/>
            <person name="Lenz C.A."/>
            <person name="Li J.H."/>
            <person name="Li Y.-P."/>
            <person name="Lin X."/>
            <person name="Liu S.X."/>
            <person name="Liu Z.A."/>
            <person name="Luros J.S."/>
            <person name="Maiti R."/>
            <person name="Marziali A."/>
            <person name="Militscher J."/>
            <person name="Miranda M."/>
            <person name="Nguyen M."/>
            <person name="Nierman W.C."/>
            <person name="Osborne B.I."/>
            <person name="Pai G."/>
            <person name="Peterson J."/>
            <person name="Pham P.K."/>
            <person name="Rizzo M."/>
            <person name="Rooney T."/>
            <person name="Rowley D."/>
            <person name="Sakano H."/>
            <person name="Salzberg S.L."/>
            <person name="Schwartz J.R."/>
            <person name="Shinn P."/>
            <person name="Southwick A.M."/>
            <person name="Sun H."/>
            <person name="Tallon L.J."/>
            <person name="Tambunga G."/>
            <person name="Toriumi M.J."/>
            <person name="Town C.D."/>
            <person name="Utterback T."/>
            <person name="Van Aken S."/>
            <person name="Vaysberg M."/>
            <person name="Vysotskaia V.S."/>
            <person name="Walker M."/>
            <person name="Wu D."/>
            <person name="Yu G."/>
            <person name="Fraser C.M."/>
            <person name="Venter J.C."/>
            <person name="Davis R.W."/>
        </authorList>
    </citation>
    <scope>NUCLEOTIDE SEQUENCE [LARGE SCALE GENOMIC DNA]</scope>
    <source>
        <strain>cv. Columbia</strain>
    </source>
</reference>
<reference key="2">
    <citation type="journal article" date="2017" name="Plant J.">
        <title>Araport11: a complete reannotation of the Arabidopsis thaliana reference genome.</title>
        <authorList>
            <person name="Cheng C.Y."/>
            <person name="Krishnakumar V."/>
            <person name="Chan A.P."/>
            <person name="Thibaud-Nissen F."/>
            <person name="Schobel S."/>
            <person name="Town C.D."/>
        </authorList>
    </citation>
    <scope>GENOME REANNOTATION</scope>
    <source>
        <strain>cv. Columbia</strain>
    </source>
</reference>
<reference key="3">
    <citation type="journal article" date="2007" name="Plant Physiol.">
        <title>Localization of members of the gamma-glutamyl transpeptidase family identifies sites of glutathione and glutathione S-conjugate hydrolysis.</title>
        <authorList>
            <person name="Martin M.N."/>
            <person name="Saladores P.H."/>
            <person name="Lambert E."/>
            <person name="Hudson A.O."/>
            <person name="Leustek T."/>
        </authorList>
    </citation>
    <scope>TISSUE SPECIFICITY</scope>
    <scope>DISRUPTION PHENOTYPE</scope>
</reference>
<reference key="4">
    <citation type="journal article" date="2011" name="J. Exp. Bot.">
        <title>Compensatory expression and substrate inducibility of gamma-glutamyl transferase GGT2 isoform in Arabidopsis thaliana.</title>
        <authorList>
            <person name="Destro T."/>
            <person name="Prasad D."/>
            <person name="Martignago D."/>
            <person name="Bernet I.L."/>
            <person name="Trentin A.R."/>
            <person name="Renu I.K."/>
            <person name="Ferretti M."/>
            <person name="Masi A."/>
        </authorList>
    </citation>
    <scope>TISSUE SPECIFICITY</scope>
</reference>
<feature type="chain" id="PRO_0000420914" description="Putative inactive glutathione hydrolase 4">
    <location>
        <begin position="1"/>
        <end position="191"/>
    </location>
</feature>
<feature type="active site" description="Nucleophile" evidence="1">
    <location>
        <position position="54"/>
    </location>
</feature>
<feature type="binding site" evidence="1">
    <location>
        <position position="72"/>
    </location>
    <ligand>
        <name>L-glutamate</name>
        <dbReference type="ChEBI" id="CHEBI:29985"/>
    </ligand>
</feature>
<feature type="binding site" evidence="1">
    <location>
        <position position="74"/>
    </location>
    <ligand>
        <name>L-glutamate</name>
        <dbReference type="ChEBI" id="CHEBI:29985"/>
    </ligand>
</feature>
<feature type="binding site" evidence="1">
    <location>
        <position position="93"/>
    </location>
    <ligand>
        <name>L-glutamate</name>
        <dbReference type="ChEBI" id="CHEBI:29985"/>
    </ligand>
</feature>
<feature type="binding site" evidence="1">
    <location>
        <position position="96"/>
    </location>
    <ligand>
        <name>L-glutamate</name>
        <dbReference type="ChEBI" id="CHEBI:29985"/>
    </ligand>
</feature>
<feature type="binding site" evidence="1">
    <location>
        <begin position="126"/>
        <end position="127"/>
    </location>
    <ligand>
        <name>L-glutamate</name>
        <dbReference type="ChEBI" id="CHEBI:29985"/>
    </ligand>
</feature>
<feature type="binding site" evidence="1">
    <location>
        <begin position="147"/>
        <end position="148"/>
    </location>
    <ligand>
        <name>L-glutamate</name>
        <dbReference type="ChEBI" id="CHEBI:29985"/>
    </ligand>
</feature>
<gene>
    <name type="primary">GGT4</name>
    <name type="synonym">GGT3</name>
    <name type="ordered locus">At1g69820</name>
    <name type="ORF">T17F3.15</name>
</gene>
<evidence type="ECO:0000250" key="1"/>
<evidence type="ECO:0000269" key="2">
    <source>
    </source>
</evidence>
<evidence type="ECO:0000269" key="3">
    <source>
    </source>
</evidence>
<evidence type="ECO:0000305" key="4"/>
<comment type="tissue specificity">
    <text evidence="2 3">Expressed at low levels in embryo, roots and leaves. In mature plants, expression is restricted to vascular tissues of roots, leaves, flowers and siliques.</text>
</comment>
<comment type="disruption phenotype">
    <text evidence="2">Mutant plants (Ds insertion) display reduced inflorescence height, silique number and seed yield.</text>
</comment>
<comment type="similarity">
    <text evidence="4">Belongs to the gamma-glutamyltransferase family.</text>
</comment>
<comment type="caution">
    <text evidence="4">Could be the product of a pseudogene; it is missing regions at the N- and C-terminus compared to its paralogs.</text>
</comment>
<sequence>MNLGDPDFVDVSKVISDMLSTNFAQGLKKKINDNKTFDPNYYGGRWDQINDHGTSHLSIIDSERNVVSLTSTINSYFGALMLSPSTGIVLNNEMDDFSIPMKSSSNLTVPPPAPANFIRPGKRPLSSMTPTIVLKDGKVKASVGASGGLYIIAGTTEVFLNYFFLKMDPLSSVLAPRIYHQLIPNIVSYEN</sequence>
<proteinExistence type="uncertain"/>